<organism>
    <name type="scientific">Manihot esculenta</name>
    <name type="common">Cassava</name>
    <name type="synonym">Jatropha manihot</name>
    <dbReference type="NCBI Taxonomy" id="3983"/>
    <lineage>
        <taxon>Eukaryota</taxon>
        <taxon>Viridiplantae</taxon>
        <taxon>Streptophyta</taxon>
        <taxon>Embryophyta</taxon>
        <taxon>Tracheophyta</taxon>
        <taxon>Spermatophyta</taxon>
        <taxon>Magnoliopsida</taxon>
        <taxon>eudicotyledons</taxon>
        <taxon>Gunneridae</taxon>
        <taxon>Pentapetalae</taxon>
        <taxon>rosids</taxon>
        <taxon>fabids</taxon>
        <taxon>Malpighiales</taxon>
        <taxon>Euphorbiaceae</taxon>
        <taxon>Crotonoideae</taxon>
        <taxon>Manihoteae</taxon>
        <taxon>Manihot</taxon>
    </lineage>
</organism>
<evidence type="ECO:0000305" key="1"/>
<accession>B1NWD9</accession>
<reference key="1">
    <citation type="journal article" date="2008" name="Theor. Appl. Genet.">
        <title>The complete nucleotide sequence of the cassava (Manihot esculenta) chloroplast genome and the evolution of atpF in Malpighiales: RNA editing and multiple losses of a group II intron.</title>
        <authorList>
            <person name="Daniell H."/>
            <person name="Wurdack K.J."/>
            <person name="Kanagaraj A."/>
            <person name="Lee S.-B."/>
            <person name="Saski C."/>
            <person name="Jansen R.K."/>
        </authorList>
    </citation>
    <scope>NUCLEOTIDE SEQUENCE [LARGE SCALE GENOMIC DNA]</scope>
    <source>
        <strain>cv. TME3</strain>
    </source>
</reference>
<keyword id="KW-0150">Chloroplast</keyword>
<keyword id="KW-0934">Plastid</keyword>
<keyword id="KW-0687">Ribonucleoprotein</keyword>
<keyword id="KW-0689">Ribosomal protein</keyword>
<comment type="subcellular location">
    <subcellularLocation>
        <location>Plastid</location>
        <location>Chloroplast</location>
    </subcellularLocation>
</comment>
<comment type="similarity">
    <text evidence="1">Belongs to the universal ribosomal protein uS2 family.</text>
</comment>
<dbReference type="EMBL" id="EU117376">
    <property type="protein sequence ID" value="ABV66143.1"/>
    <property type="molecule type" value="Genomic_DNA"/>
</dbReference>
<dbReference type="RefSeq" id="YP_001718426.1">
    <property type="nucleotide sequence ID" value="NC_010433.1"/>
</dbReference>
<dbReference type="SMR" id="B1NWD9"/>
<dbReference type="GeneID" id="6000041"/>
<dbReference type="KEGG" id="mesc:6000041"/>
<dbReference type="OrthoDB" id="565471at2759"/>
<dbReference type="GO" id="GO:0009507">
    <property type="term" value="C:chloroplast"/>
    <property type="evidence" value="ECO:0007669"/>
    <property type="project" value="UniProtKB-SubCell"/>
</dbReference>
<dbReference type="GO" id="GO:0015935">
    <property type="term" value="C:small ribosomal subunit"/>
    <property type="evidence" value="ECO:0007669"/>
    <property type="project" value="InterPro"/>
</dbReference>
<dbReference type="GO" id="GO:0003735">
    <property type="term" value="F:structural constituent of ribosome"/>
    <property type="evidence" value="ECO:0007669"/>
    <property type="project" value="InterPro"/>
</dbReference>
<dbReference type="GO" id="GO:0006412">
    <property type="term" value="P:translation"/>
    <property type="evidence" value="ECO:0007669"/>
    <property type="project" value="UniProtKB-UniRule"/>
</dbReference>
<dbReference type="CDD" id="cd01425">
    <property type="entry name" value="RPS2"/>
    <property type="match status" value="1"/>
</dbReference>
<dbReference type="FunFam" id="3.40.50.10490:FF:000101">
    <property type="match status" value="1"/>
</dbReference>
<dbReference type="FunFam" id="1.10.287.610:FF:000001">
    <property type="entry name" value="30S ribosomal protein S2"/>
    <property type="match status" value="1"/>
</dbReference>
<dbReference type="Gene3D" id="3.40.50.10490">
    <property type="entry name" value="Glucose-6-phosphate isomerase like protein, domain 1"/>
    <property type="match status" value="1"/>
</dbReference>
<dbReference type="Gene3D" id="1.10.287.610">
    <property type="entry name" value="Helix hairpin bin"/>
    <property type="match status" value="1"/>
</dbReference>
<dbReference type="HAMAP" id="MF_00291_B">
    <property type="entry name" value="Ribosomal_uS2_B"/>
    <property type="match status" value="1"/>
</dbReference>
<dbReference type="InterPro" id="IPR001865">
    <property type="entry name" value="Ribosomal_uS2"/>
</dbReference>
<dbReference type="InterPro" id="IPR005706">
    <property type="entry name" value="Ribosomal_uS2_bac/mit/plastid"/>
</dbReference>
<dbReference type="InterPro" id="IPR018130">
    <property type="entry name" value="Ribosomal_uS2_CS"/>
</dbReference>
<dbReference type="InterPro" id="IPR023591">
    <property type="entry name" value="Ribosomal_uS2_flav_dom_sf"/>
</dbReference>
<dbReference type="NCBIfam" id="TIGR01011">
    <property type="entry name" value="rpsB_bact"/>
    <property type="match status" value="1"/>
</dbReference>
<dbReference type="PANTHER" id="PTHR12534">
    <property type="entry name" value="30S RIBOSOMAL PROTEIN S2 PROKARYOTIC AND ORGANELLAR"/>
    <property type="match status" value="1"/>
</dbReference>
<dbReference type="PANTHER" id="PTHR12534:SF0">
    <property type="entry name" value="SMALL RIBOSOMAL SUBUNIT PROTEIN US2M"/>
    <property type="match status" value="1"/>
</dbReference>
<dbReference type="Pfam" id="PF00318">
    <property type="entry name" value="Ribosomal_S2"/>
    <property type="match status" value="1"/>
</dbReference>
<dbReference type="PRINTS" id="PR00395">
    <property type="entry name" value="RIBOSOMALS2"/>
</dbReference>
<dbReference type="SUPFAM" id="SSF52313">
    <property type="entry name" value="Ribosomal protein S2"/>
    <property type="match status" value="1"/>
</dbReference>
<dbReference type="PROSITE" id="PS00962">
    <property type="entry name" value="RIBOSOMAL_S2_1"/>
    <property type="match status" value="1"/>
</dbReference>
<dbReference type="PROSITE" id="PS00963">
    <property type="entry name" value="RIBOSOMAL_S2_2"/>
    <property type="match status" value="1"/>
</dbReference>
<protein>
    <recommendedName>
        <fullName evidence="1">Small ribosomal subunit protein uS2c</fullName>
    </recommendedName>
    <alternativeName>
        <fullName>30S ribosomal protein S2, chloroplastic</fullName>
    </alternativeName>
</protein>
<feature type="chain" id="PRO_0000352130" description="Small ribosomal subunit protein uS2c">
    <location>
        <begin position="1"/>
        <end position="236"/>
    </location>
</feature>
<proteinExistence type="inferred from homology"/>
<sequence>MIRRYWNINFEEMMKAGVHFGHGTRKWNPRMAPYISAKRKGIHITNLTRTARFLSEACDLVFDAASRRKQFLIVGTKNKAADSVARAAIRARCHYVNKKWLGGILTNWSTTETRLQKFRDLRMEQKAGRLNRLPKGDAARLKRQLAHLQTYLGGIKYMTGLPDIVIIVDQQEEYTALRECMTLGIPTICLIDTNCDPDLADISIPTNDDAIASIRLILNKLVFAICEGRSSYIRNP</sequence>
<geneLocation type="chloroplast"/>
<name>RR2_MANES</name>
<gene>
    <name type="primary">rps2</name>
</gene>